<proteinExistence type="inferred from homology"/>
<keyword id="KW-1185">Reference proteome</keyword>
<keyword id="KW-0687">Ribonucleoprotein</keyword>
<keyword id="KW-0689">Ribosomal protein</keyword>
<feature type="chain" id="PRO_1000121498" description="Large ribosomal subunit protein bL12">
    <location>
        <begin position="1"/>
        <end position="128"/>
    </location>
</feature>
<accession>B7ICR4</accession>
<organism>
    <name type="scientific">Thermosipho africanus (strain TCF52B)</name>
    <dbReference type="NCBI Taxonomy" id="484019"/>
    <lineage>
        <taxon>Bacteria</taxon>
        <taxon>Thermotogati</taxon>
        <taxon>Thermotogota</taxon>
        <taxon>Thermotogae</taxon>
        <taxon>Thermotogales</taxon>
        <taxon>Fervidobacteriaceae</taxon>
        <taxon>Thermosipho</taxon>
    </lineage>
</organism>
<reference key="1">
    <citation type="journal article" date="2009" name="J. Bacteriol.">
        <title>The genome of Thermosipho africanus TCF52B: lateral genetic connections to the Firmicutes and Archaea.</title>
        <authorList>
            <person name="Nesboe C.L."/>
            <person name="Bapteste E."/>
            <person name="Curtis B."/>
            <person name="Dahle H."/>
            <person name="Lopez P."/>
            <person name="Macleod D."/>
            <person name="Dlutek M."/>
            <person name="Bowman S."/>
            <person name="Zhaxybayeva O."/>
            <person name="Birkeland N.-K."/>
            <person name="Doolittle W.F."/>
        </authorList>
    </citation>
    <scope>NUCLEOTIDE SEQUENCE [LARGE SCALE GENOMIC DNA]</scope>
    <source>
        <strain>TCF52B</strain>
    </source>
</reference>
<evidence type="ECO:0000255" key="1">
    <source>
        <dbReference type="HAMAP-Rule" id="MF_00368"/>
    </source>
</evidence>
<evidence type="ECO:0000305" key="2"/>
<protein>
    <recommendedName>
        <fullName evidence="1">Large ribosomal subunit protein bL12</fullName>
    </recommendedName>
    <alternativeName>
        <fullName evidence="2">50S ribosomal protein L7/L12</fullName>
    </alternativeName>
</protein>
<gene>
    <name evidence="1" type="primary">rplL</name>
    <name type="ordered locus">THA_1346</name>
</gene>
<dbReference type="EMBL" id="CP001185">
    <property type="protein sequence ID" value="ACJ75791.1"/>
    <property type="molecule type" value="Genomic_DNA"/>
</dbReference>
<dbReference type="RefSeq" id="WP_004101702.1">
    <property type="nucleotide sequence ID" value="NC_011653.1"/>
</dbReference>
<dbReference type="SMR" id="B7ICR4"/>
<dbReference type="STRING" id="484019.THA_1346"/>
<dbReference type="KEGG" id="taf:THA_1346"/>
<dbReference type="eggNOG" id="COG0222">
    <property type="taxonomic scope" value="Bacteria"/>
</dbReference>
<dbReference type="HOGENOM" id="CLU_086499_3_2_0"/>
<dbReference type="OrthoDB" id="9811748at2"/>
<dbReference type="Proteomes" id="UP000002453">
    <property type="component" value="Chromosome"/>
</dbReference>
<dbReference type="GO" id="GO:0022625">
    <property type="term" value="C:cytosolic large ribosomal subunit"/>
    <property type="evidence" value="ECO:0007669"/>
    <property type="project" value="TreeGrafter"/>
</dbReference>
<dbReference type="GO" id="GO:0003729">
    <property type="term" value="F:mRNA binding"/>
    <property type="evidence" value="ECO:0007669"/>
    <property type="project" value="TreeGrafter"/>
</dbReference>
<dbReference type="GO" id="GO:0003735">
    <property type="term" value="F:structural constituent of ribosome"/>
    <property type="evidence" value="ECO:0007669"/>
    <property type="project" value="InterPro"/>
</dbReference>
<dbReference type="GO" id="GO:0006412">
    <property type="term" value="P:translation"/>
    <property type="evidence" value="ECO:0007669"/>
    <property type="project" value="UniProtKB-UniRule"/>
</dbReference>
<dbReference type="CDD" id="cd00387">
    <property type="entry name" value="Ribosomal_L7_L12"/>
    <property type="match status" value="1"/>
</dbReference>
<dbReference type="FunFam" id="3.30.1390.10:FF:000001">
    <property type="entry name" value="50S ribosomal protein L7/L12"/>
    <property type="match status" value="1"/>
</dbReference>
<dbReference type="Gene3D" id="3.30.1390.10">
    <property type="match status" value="1"/>
</dbReference>
<dbReference type="Gene3D" id="1.20.5.710">
    <property type="entry name" value="Single helix bin"/>
    <property type="match status" value="1"/>
</dbReference>
<dbReference type="HAMAP" id="MF_00368">
    <property type="entry name" value="Ribosomal_bL12"/>
    <property type="match status" value="1"/>
</dbReference>
<dbReference type="InterPro" id="IPR000206">
    <property type="entry name" value="Ribosomal_bL12"/>
</dbReference>
<dbReference type="InterPro" id="IPR013823">
    <property type="entry name" value="Ribosomal_bL12_C"/>
</dbReference>
<dbReference type="InterPro" id="IPR014719">
    <property type="entry name" value="Ribosomal_bL12_C/ClpS-like"/>
</dbReference>
<dbReference type="InterPro" id="IPR008932">
    <property type="entry name" value="Ribosomal_bL12_oligo"/>
</dbReference>
<dbReference type="InterPro" id="IPR036235">
    <property type="entry name" value="Ribosomal_bL12_oligo_N_sf"/>
</dbReference>
<dbReference type="NCBIfam" id="TIGR00855">
    <property type="entry name" value="L12"/>
    <property type="match status" value="1"/>
</dbReference>
<dbReference type="PANTHER" id="PTHR45987">
    <property type="entry name" value="39S RIBOSOMAL PROTEIN L12"/>
    <property type="match status" value="1"/>
</dbReference>
<dbReference type="PANTHER" id="PTHR45987:SF4">
    <property type="entry name" value="LARGE RIBOSOMAL SUBUNIT PROTEIN BL12M"/>
    <property type="match status" value="1"/>
</dbReference>
<dbReference type="Pfam" id="PF00542">
    <property type="entry name" value="Ribosomal_L12"/>
    <property type="match status" value="1"/>
</dbReference>
<dbReference type="Pfam" id="PF16320">
    <property type="entry name" value="Ribosomal_L12_N"/>
    <property type="match status" value="1"/>
</dbReference>
<dbReference type="SUPFAM" id="SSF54736">
    <property type="entry name" value="ClpS-like"/>
    <property type="match status" value="1"/>
</dbReference>
<dbReference type="SUPFAM" id="SSF48300">
    <property type="entry name" value="Ribosomal protein L7/12, oligomerisation (N-terminal) domain"/>
    <property type="match status" value="1"/>
</dbReference>
<comment type="function">
    <text evidence="1">Forms part of the ribosomal stalk which helps the ribosome interact with GTP-bound translation factors. Is thus essential for accurate translation.</text>
</comment>
<comment type="subunit">
    <text evidence="1">Homodimer. Part of the ribosomal stalk of the 50S ribosomal subunit. Forms a multimeric L10(L12)X complex, where L10 forms an elongated spine to which 2 to 4 L12 dimers bind in a sequential fashion. Binds GTP-bound translation factors.</text>
</comment>
<comment type="similarity">
    <text evidence="1">Belongs to the bacterial ribosomal protein bL12 family.</text>
</comment>
<sequence>MTLEEIVSAIEQLTVAELAELVKMLEDKFGVSASAPVMAMPMAGAAAGGAAAAEEKTEFDVVLKSFGAKKIEVIKVIREITGLGLKEAKDLVEKAGTPDAVVKQGAAKEEAEEIKKKLEAAGAEVELK</sequence>
<name>RL7_THEAB</name>